<protein>
    <recommendedName>
        <fullName evidence="1">2-dehydro-3-deoxyphosphooctonate aldolase</fullName>
        <ecNumber evidence="1">2.5.1.55</ecNumber>
    </recommendedName>
    <alternativeName>
        <fullName evidence="1">3-deoxy-D-manno-octulosonic acid 8-phosphate synthase</fullName>
    </alternativeName>
    <alternativeName>
        <fullName evidence="1">KDO-8-phosphate synthase</fullName>
        <shortName evidence="1">KDO 8-P synthase</shortName>
        <shortName evidence="1">KDOPS</shortName>
    </alternativeName>
    <alternativeName>
        <fullName evidence="1">Phospho-2-dehydro-3-deoxyoctonate aldolase</fullName>
    </alternativeName>
</protein>
<comment type="catalytic activity">
    <reaction evidence="1">
        <text>D-arabinose 5-phosphate + phosphoenolpyruvate + H2O = 3-deoxy-alpha-D-manno-2-octulosonate-8-phosphate + phosphate</text>
        <dbReference type="Rhea" id="RHEA:14053"/>
        <dbReference type="ChEBI" id="CHEBI:15377"/>
        <dbReference type="ChEBI" id="CHEBI:43474"/>
        <dbReference type="ChEBI" id="CHEBI:57693"/>
        <dbReference type="ChEBI" id="CHEBI:58702"/>
        <dbReference type="ChEBI" id="CHEBI:85985"/>
        <dbReference type="EC" id="2.5.1.55"/>
    </reaction>
</comment>
<comment type="pathway">
    <text evidence="1">Carbohydrate biosynthesis; 3-deoxy-D-manno-octulosonate biosynthesis; 3-deoxy-D-manno-octulosonate from D-ribulose 5-phosphate: step 2/3.</text>
</comment>
<comment type="pathway">
    <text evidence="1">Bacterial outer membrane biogenesis; lipopolysaccharide biosynthesis.</text>
</comment>
<comment type="subcellular location">
    <subcellularLocation>
        <location evidence="1">Cytoplasm</location>
    </subcellularLocation>
</comment>
<comment type="similarity">
    <text evidence="1">Belongs to the KdsA family.</text>
</comment>
<dbReference type="EC" id="2.5.1.55" evidence="1"/>
<dbReference type="EMBL" id="BA000040">
    <property type="protein sequence ID" value="BAC50065.1"/>
    <property type="molecule type" value="Genomic_DNA"/>
</dbReference>
<dbReference type="RefSeq" id="NP_771440.1">
    <property type="nucleotide sequence ID" value="NC_004463.1"/>
</dbReference>
<dbReference type="RefSeq" id="WP_011087568.1">
    <property type="nucleotide sequence ID" value="NC_004463.1"/>
</dbReference>
<dbReference type="SMR" id="Q89KV0"/>
<dbReference type="FunCoup" id="Q89KV0">
    <property type="interactions" value="469"/>
</dbReference>
<dbReference type="STRING" id="224911.AAV28_21295"/>
<dbReference type="EnsemblBacteria" id="BAC50065">
    <property type="protein sequence ID" value="BAC50065"/>
    <property type="gene ID" value="BAC50065"/>
</dbReference>
<dbReference type="GeneID" id="46491805"/>
<dbReference type="KEGG" id="bja:bll4800"/>
<dbReference type="PATRIC" id="fig|224911.44.peg.4639"/>
<dbReference type="eggNOG" id="COG2877">
    <property type="taxonomic scope" value="Bacteria"/>
</dbReference>
<dbReference type="HOGENOM" id="CLU_036666_0_0_5"/>
<dbReference type="InParanoid" id="Q89KV0"/>
<dbReference type="OrthoDB" id="9776934at2"/>
<dbReference type="PhylomeDB" id="Q89KV0"/>
<dbReference type="UniPathway" id="UPA00030"/>
<dbReference type="UniPathway" id="UPA00357">
    <property type="reaction ID" value="UER00474"/>
</dbReference>
<dbReference type="Proteomes" id="UP000002526">
    <property type="component" value="Chromosome"/>
</dbReference>
<dbReference type="GO" id="GO:0005829">
    <property type="term" value="C:cytosol"/>
    <property type="evidence" value="ECO:0000318"/>
    <property type="project" value="GO_Central"/>
</dbReference>
<dbReference type="GO" id="GO:0008676">
    <property type="term" value="F:3-deoxy-8-phosphooctulonate synthase activity"/>
    <property type="evidence" value="ECO:0000318"/>
    <property type="project" value="GO_Central"/>
</dbReference>
<dbReference type="GO" id="GO:0019294">
    <property type="term" value="P:keto-3-deoxy-D-manno-octulosonic acid biosynthetic process"/>
    <property type="evidence" value="ECO:0000318"/>
    <property type="project" value="GO_Central"/>
</dbReference>
<dbReference type="Gene3D" id="3.20.20.70">
    <property type="entry name" value="Aldolase class I"/>
    <property type="match status" value="1"/>
</dbReference>
<dbReference type="HAMAP" id="MF_00056">
    <property type="entry name" value="KDO8P_synth"/>
    <property type="match status" value="1"/>
</dbReference>
<dbReference type="InterPro" id="IPR013785">
    <property type="entry name" value="Aldolase_TIM"/>
</dbReference>
<dbReference type="InterPro" id="IPR006218">
    <property type="entry name" value="DAHP1/KDSA"/>
</dbReference>
<dbReference type="InterPro" id="IPR006269">
    <property type="entry name" value="KDO8P_synthase"/>
</dbReference>
<dbReference type="NCBIfam" id="TIGR01362">
    <property type="entry name" value="KDO8P_synth"/>
    <property type="match status" value="1"/>
</dbReference>
<dbReference type="NCBIfam" id="NF003543">
    <property type="entry name" value="PRK05198.1"/>
    <property type="match status" value="1"/>
</dbReference>
<dbReference type="PANTHER" id="PTHR21057">
    <property type="entry name" value="PHOSPHO-2-DEHYDRO-3-DEOXYHEPTONATE ALDOLASE"/>
    <property type="match status" value="1"/>
</dbReference>
<dbReference type="Pfam" id="PF00793">
    <property type="entry name" value="DAHP_synth_1"/>
    <property type="match status" value="1"/>
</dbReference>
<dbReference type="SUPFAM" id="SSF51569">
    <property type="entry name" value="Aldolase"/>
    <property type="match status" value="1"/>
</dbReference>
<feature type="chain" id="PRO_0000187106" description="2-dehydro-3-deoxyphosphooctonate aldolase">
    <location>
        <begin position="1"/>
        <end position="282"/>
    </location>
</feature>
<organism>
    <name type="scientific">Bradyrhizobium diazoefficiens (strain JCM 10833 / BCRC 13528 / IAM 13628 / NBRC 14792 / USDA 110)</name>
    <dbReference type="NCBI Taxonomy" id="224911"/>
    <lineage>
        <taxon>Bacteria</taxon>
        <taxon>Pseudomonadati</taxon>
        <taxon>Pseudomonadota</taxon>
        <taxon>Alphaproteobacteria</taxon>
        <taxon>Hyphomicrobiales</taxon>
        <taxon>Nitrobacteraceae</taxon>
        <taxon>Bradyrhizobium</taxon>
    </lineage>
</organism>
<name>KDSA_BRADU</name>
<sequence length="282" mass="29578">MSSSTSAAPVVTIGRVKFGNDLPISIIAGPCQLESRQHALEVASALKEIAARLNIGLVYKTSFDKANRTSASAARGLGLAQSLPIFAEIRSSLGLPVLTDVHEATQCAEVAQAVDILQIPAFLCRQTDLLLAAAATGKVVNVKKGQFLAPWDMANVVTKITSANNPNVLVTERGASFGYNTLVSDMRALPILARTTGAPVIFDATHSVQQPGGKGTSSGGEREFVPVLARAAVAVGVAGVFIETHPDPDSAPSDGPNMVPLREFEGLIRRLMAFDALAKNPR</sequence>
<reference key="1">
    <citation type="journal article" date="2002" name="DNA Res.">
        <title>Complete genomic sequence of nitrogen-fixing symbiotic bacterium Bradyrhizobium japonicum USDA110.</title>
        <authorList>
            <person name="Kaneko T."/>
            <person name="Nakamura Y."/>
            <person name="Sato S."/>
            <person name="Minamisawa K."/>
            <person name="Uchiumi T."/>
            <person name="Sasamoto S."/>
            <person name="Watanabe A."/>
            <person name="Idesawa K."/>
            <person name="Iriguchi M."/>
            <person name="Kawashima K."/>
            <person name="Kohara M."/>
            <person name="Matsumoto M."/>
            <person name="Shimpo S."/>
            <person name="Tsuruoka H."/>
            <person name="Wada T."/>
            <person name="Yamada M."/>
            <person name="Tabata S."/>
        </authorList>
    </citation>
    <scope>NUCLEOTIDE SEQUENCE [LARGE SCALE GENOMIC DNA]</scope>
    <source>
        <strain>JCM 10833 / BCRC 13528 / IAM 13628 / NBRC 14792 / USDA 110</strain>
    </source>
</reference>
<accession>Q89KV0</accession>
<evidence type="ECO:0000255" key="1">
    <source>
        <dbReference type="HAMAP-Rule" id="MF_00056"/>
    </source>
</evidence>
<keyword id="KW-0963">Cytoplasm</keyword>
<keyword id="KW-0448">Lipopolysaccharide biosynthesis</keyword>
<keyword id="KW-1185">Reference proteome</keyword>
<keyword id="KW-0808">Transferase</keyword>
<proteinExistence type="inferred from homology"/>
<gene>
    <name evidence="1" type="primary">kdsA</name>
    <name type="ordered locus">bll4800</name>
</gene>